<feature type="chain" id="PRO_0000048617" description="Transcription factor 7-like 1-B">
    <location>
        <begin position="1"/>
        <end position="551"/>
    </location>
</feature>
<feature type="DNA-binding region" description="HMG box" evidence="2">
    <location>
        <begin position="324"/>
        <end position="392"/>
    </location>
</feature>
<feature type="region of interest" description="Disordered" evidence="3">
    <location>
        <begin position="1"/>
        <end position="77"/>
    </location>
</feature>
<feature type="region of interest" description="Interaction with CTNNB1-A" evidence="1">
    <location>
        <begin position="1"/>
        <end position="61"/>
    </location>
</feature>
<feature type="region of interest" description="Interaction with AES and TLE4-A" evidence="1">
    <location>
        <begin position="109"/>
        <end position="312"/>
    </location>
</feature>
<feature type="region of interest" description="Disordered" evidence="3">
    <location>
        <begin position="183"/>
        <end position="213"/>
    </location>
</feature>
<feature type="region of interest" description="Disordered" evidence="3">
    <location>
        <begin position="391"/>
        <end position="474"/>
    </location>
</feature>
<feature type="region of interest" description="Interaction with CTBP-B" evidence="1">
    <location>
        <begin position="408"/>
        <end position="551"/>
    </location>
</feature>
<feature type="region of interest" description="Disordered" evidence="3">
    <location>
        <begin position="492"/>
        <end position="515"/>
    </location>
</feature>
<feature type="compositionally biased region" description="Gly residues" evidence="3">
    <location>
        <begin position="1"/>
        <end position="11"/>
    </location>
</feature>
<feature type="compositionally biased region" description="Basic and acidic residues" evidence="3">
    <location>
        <begin position="17"/>
        <end position="32"/>
    </location>
</feature>
<feature type="compositionally biased region" description="Basic and acidic residues" evidence="3">
    <location>
        <begin position="52"/>
        <end position="77"/>
    </location>
</feature>
<feature type="compositionally biased region" description="Basic and acidic residues" evidence="3">
    <location>
        <begin position="407"/>
        <end position="416"/>
    </location>
</feature>
<feature type="compositionally biased region" description="Low complexity" evidence="3">
    <location>
        <begin position="445"/>
        <end position="464"/>
    </location>
</feature>
<feature type="compositionally biased region" description="Polar residues" evidence="3">
    <location>
        <begin position="465"/>
        <end position="474"/>
    </location>
</feature>
<feature type="sequence conflict" description="In Ref. 2; AAH77764." evidence="7" ref="2">
    <location>
        <begin position="203"/>
        <end position="222"/>
    </location>
</feature>
<organism>
    <name type="scientific">Xenopus laevis</name>
    <name type="common">African clawed frog</name>
    <dbReference type="NCBI Taxonomy" id="8355"/>
    <lineage>
        <taxon>Eukaryota</taxon>
        <taxon>Metazoa</taxon>
        <taxon>Chordata</taxon>
        <taxon>Craniata</taxon>
        <taxon>Vertebrata</taxon>
        <taxon>Euteleostomi</taxon>
        <taxon>Amphibia</taxon>
        <taxon>Batrachia</taxon>
        <taxon>Anura</taxon>
        <taxon>Pipoidea</taxon>
        <taxon>Pipidae</taxon>
        <taxon>Xenopodinae</taxon>
        <taxon>Xenopus</taxon>
        <taxon>Xenopus</taxon>
    </lineage>
</organism>
<accession>Q90ZB6</accession>
<accession>Q6DD63</accession>
<dbReference type="EMBL" id="AF287149">
    <property type="protein sequence ID" value="AAK58835.1"/>
    <property type="molecule type" value="mRNA"/>
</dbReference>
<dbReference type="EMBL" id="BC077764">
    <property type="protein sequence ID" value="AAH77764.1"/>
    <property type="molecule type" value="mRNA"/>
</dbReference>
<dbReference type="RefSeq" id="NP_001080938.1">
    <property type="nucleotide sequence ID" value="NM_001087469.2"/>
</dbReference>
<dbReference type="SMR" id="Q90ZB6"/>
<dbReference type="IntAct" id="Q90ZB6">
    <property type="interactions" value="4"/>
</dbReference>
<dbReference type="MINT" id="Q90ZB6"/>
<dbReference type="DNASU" id="394281"/>
<dbReference type="GeneID" id="394281"/>
<dbReference type="KEGG" id="xla:394281"/>
<dbReference type="AGR" id="Xenbase:XB-GENE-1031992"/>
<dbReference type="CTD" id="394281"/>
<dbReference type="Xenbase" id="XB-GENE-1031992">
    <property type="gene designation" value="tcf7l1.S"/>
</dbReference>
<dbReference type="OMA" id="RECFTEG"/>
<dbReference type="OrthoDB" id="2307332at2759"/>
<dbReference type="Proteomes" id="UP000186698">
    <property type="component" value="Chromosome 3S"/>
</dbReference>
<dbReference type="Bgee" id="394281">
    <property type="expression patterns" value="Expressed in blastula and 19 other cell types or tissues"/>
</dbReference>
<dbReference type="GO" id="GO:1990907">
    <property type="term" value="C:beta-catenin-TCF complex"/>
    <property type="evidence" value="ECO:0000318"/>
    <property type="project" value="GO_Central"/>
</dbReference>
<dbReference type="GO" id="GO:0000785">
    <property type="term" value="C:chromatin"/>
    <property type="evidence" value="ECO:0000318"/>
    <property type="project" value="GO_Central"/>
</dbReference>
<dbReference type="GO" id="GO:0000981">
    <property type="term" value="F:DNA-binding transcription factor activity, RNA polymerase II-specific"/>
    <property type="evidence" value="ECO:0000318"/>
    <property type="project" value="GO_Central"/>
</dbReference>
<dbReference type="GO" id="GO:0000978">
    <property type="term" value="F:RNA polymerase II cis-regulatory region sequence-specific DNA binding"/>
    <property type="evidence" value="ECO:0000318"/>
    <property type="project" value="GO_Central"/>
</dbReference>
<dbReference type="GO" id="GO:0060070">
    <property type="term" value="P:canonical Wnt signaling pathway"/>
    <property type="evidence" value="ECO:0000318"/>
    <property type="project" value="GO_Central"/>
</dbReference>
<dbReference type="GO" id="GO:0006357">
    <property type="term" value="P:regulation of transcription by RNA polymerase II"/>
    <property type="evidence" value="ECO:0000318"/>
    <property type="project" value="GO_Central"/>
</dbReference>
<dbReference type="CDD" id="cd21996">
    <property type="entry name" value="HMG-box_TCF7-like"/>
    <property type="match status" value="1"/>
</dbReference>
<dbReference type="FunFam" id="1.10.30.10:FF:000001">
    <property type="entry name" value="transcription factor 7 isoform X2"/>
    <property type="match status" value="1"/>
</dbReference>
<dbReference type="FunFam" id="4.10.900.10:FF:000002">
    <property type="entry name" value="transcription factor 7-like 2 isoform X1"/>
    <property type="match status" value="1"/>
</dbReference>
<dbReference type="Gene3D" id="1.10.30.10">
    <property type="entry name" value="High mobility group box domain"/>
    <property type="match status" value="1"/>
</dbReference>
<dbReference type="Gene3D" id="4.10.900.10">
    <property type="entry name" value="TCF3-CBD (Catenin binding domain)"/>
    <property type="match status" value="1"/>
</dbReference>
<dbReference type="InterPro" id="IPR027397">
    <property type="entry name" value="Catenin-bd_sf"/>
</dbReference>
<dbReference type="InterPro" id="IPR013558">
    <property type="entry name" value="CTNNB1-bd_N"/>
</dbReference>
<dbReference type="InterPro" id="IPR009071">
    <property type="entry name" value="HMG_box_dom"/>
</dbReference>
<dbReference type="InterPro" id="IPR036910">
    <property type="entry name" value="HMG_box_dom_sf"/>
</dbReference>
<dbReference type="InterPro" id="IPR024940">
    <property type="entry name" value="TCF/LEF"/>
</dbReference>
<dbReference type="PANTHER" id="PTHR10373">
    <property type="entry name" value="TRANSCRIPTION FACTOR 7 FAMILY MEMBER"/>
    <property type="match status" value="1"/>
</dbReference>
<dbReference type="PANTHER" id="PTHR10373:SF25">
    <property type="entry name" value="TRANSCRIPTION FACTOR 7-LIKE 1"/>
    <property type="match status" value="1"/>
</dbReference>
<dbReference type="Pfam" id="PF08347">
    <property type="entry name" value="CTNNB1_binding"/>
    <property type="match status" value="1"/>
</dbReference>
<dbReference type="Pfam" id="PF00505">
    <property type="entry name" value="HMG_box"/>
    <property type="match status" value="1"/>
</dbReference>
<dbReference type="SMART" id="SM00398">
    <property type="entry name" value="HMG"/>
    <property type="match status" value="1"/>
</dbReference>
<dbReference type="SUPFAM" id="SSF47095">
    <property type="entry name" value="HMG-box"/>
    <property type="match status" value="1"/>
</dbReference>
<dbReference type="PROSITE" id="PS50118">
    <property type="entry name" value="HMG_BOX_2"/>
    <property type="match status" value="1"/>
</dbReference>
<keyword id="KW-0010">Activator</keyword>
<keyword id="KW-0217">Developmental protein</keyword>
<keyword id="KW-0238">DNA-binding</keyword>
<keyword id="KW-0539">Nucleus</keyword>
<keyword id="KW-0597">Phosphoprotein</keyword>
<keyword id="KW-1185">Reference proteome</keyword>
<keyword id="KW-0678">Repressor</keyword>
<keyword id="KW-0804">Transcription</keyword>
<keyword id="KW-0805">Transcription regulation</keyword>
<keyword id="KW-0879">Wnt signaling pathway</keyword>
<gene>
    <name type="primary">tcf7l1-b</name>
    <name type="synonym">tcf3</name>
    <name type="synonym">tcf3b</name>
</gene>
<name>T7L1B_XENLA</name>
<proteinExistence type="evidence at protein level"/>
<sequence length="551" mass="59962">MPQLNSGGGDELGANDELIRFKDEGEQEEKSPGEGSAEGDLADVKSSLVNESENHSSDSDSEVERRPPPRETFEKPRDYLSEAFRRQQDAAFFKGPPYAGYPFLMIPDLGGHYLPNGALSPSARAYLQMKWPLLDSPSTAGLKDARSPSPAHLSNKVPVVQHPHHMHPLTPLITYSNEHFSPGTPPGHLSPEIDPKTGIPRPPHPSELSPYYPLSPGAVGQIPHPLGWLVPQQGQPMYSIPPGGFRHPYPALAMNASMSSLVSSRFSPHMVPPPHHSLHTSGIPHPAIVSPIVKQEPSSGNISPNLSTKSNVVVKKEEEKKPHIKKPLNAFMLYMKEMRAKVVAECTLKESAAINQILGRRWHSLSREEQAKYYELARKERQLHSQLYPSWSARDNYGKKKKRKREKQSPEMENYTKTKKMCVQHFPSDKSCDSPASSHGSMLDSPATPSAALASPAAPAATHSEQAQPLSLTTKPEARALSHSAAFLASKSPSSSSLSGHLPSPVGSPLLSRPIPLTSSILSPPGVFPSALQALPLLQAQPLSLVTRSSD</sequence>
<protein>
    <recommendedName>
        <fullName>Transcription factor 7-like 1-B</fullName>
    </recommendedName>
    <alternativeName>
        <fullName>HMG box transcription factor 3-B</fullName>
        <shortName>TCF-3-B</shortName>
        <shortName>xTcf-3</shortName>
    </alternativeName>
</protein>
<comment type="function">
    <text evidence="4 5 6">Participates in the Wnt signaling pathway. Binds to DNA and acts as a repressor in the absence of ctnnb1-A and possibly ctnnb1-B, and as an activator in the presence of these proteins. Required early in development for the establishment of the dorsal body axis in response to maternal Wnt signaling.</text>
</comment>
<comment type="subunit">
    <text evidence="1 5">Interacts with csnk1e, ctnnb1-A, ctbp-B, dact1-A and gsk3b. May interact with ase and tle4-A (By similarity). Interacts with tle1-B.</text>
</comment>
<comment type="interaction">
    <interactant intactId="EBI-7439087">
        <id>Q90ZB6</id>
    </interactant>
    <interactant intactId="EBI-7438970">
        <id>Q7T103</id>
        <label>pou5f1.1</label>
    </interactant>
    <organismsDiffer>false</organismsDiffer>
    <experiments>3</experiments>
</comment>
<comment type="interaction">
    <interactant intactId="EBI-7439087">
        <id>Q90ZB6</id>
    </interactant>
    <interactant intactId="EBI-7439000">
        <id>P87377</id>
        <label>vegt-a</label>
    </interactant>
    <organismsDiffer>false</organismsDiffer>
    <experiments>4</experiments>
</comment>
<comment type="subcellular location">
    <subcellularLocation>
        <location evidence="2 6">Nucleus</location>
    </subcellularLocation>
</comment>
<comment type="PTM">
    <text evidence="1">Phosphorylated. Phosphorylation by csnk1e promotes binding to ctnnb1-A while phosphorylation by gsk3b may reverse this effect (By similarity).</text>
</comment>
<comment type="similarity">
    <text evidence="7">Belongs to the TCF/LEF family.</text>
</comment>
<evidence type="ECO:0000250" key="1"/>
<evidence type="ECO:0000255" key="2">
    <source>
        <dbReference type="PROSITE-ProRule" id="PRU00267"/>
    </source>
</evidence>
<evidence type="ECO:0000256" key="3">
    <source>
        <dbReference type="SAM" id="MobiDB-lite"/>
    </source>
</evidence>
<evidence type="ECO:0000269" key="4">
    <source>
    </source>
</evidence>
<evidence type="ECO:0000269" key="5">
    <source>
    </source>
</evidence>
<evidence type="ECO:0000269" key="6">
    <source>
    </source>
</evidence>
<evidence type="ECO:0000305" key="7"/>
<reference key="1">
    <citation type="journal article" date="2001" name="J. Biol. Chem.">
        <title>Identification of two regulatory elements within the high mobility group box transcription factor XTCF-4.</title>
        <authorList>
            <person name="Pukrop T."/>
            <person name="Gradl D."/>
            <person name="Henningfeld K.A."/>
            <person name="Knoechel W."/>
            <person name="Wedlich D."/>
            <person name="Kuehl M."/>
        </authorList>
    </citation>
    <scope>NUCLEOTIDE SEQUENCE [MRNA]</scope>
    <scope>FUNCTION</scope>
    <scope>DNA-BINDING</scope>
    <scope>INTERACTION WITH TLE1-B</scope>
</reference>
<reference key="2">
    <citation type="submission" date="2004-07" db="EMBL/GenBank/DDBJ databases">
        <authorList>
            <consortium name="NIH - Xenopus Gene Collection (XGC) project"/>
        </authorList>
    </citation>
    <scope>NUCLEOTIDE SEQUENCE [LARGE SCALE MRNA]</scope>
    <source>
        <tissue>Embryo</tissue>
    </source>
</reference>
<reference key="3">
    <citation type="journal article" date="1999" name="Mol. Cell. Biol.">
        <title>The Wnt/Wg signal transducer beta-catenin controls fibronectin expression.</title>
        <authorList>
            <person name="Gradl D."/>
            <person name="Kuehl M."/>
            <person name="Wedlich D."/>
        </authorList>
    </citation>
    <scope>FUNCTION</scope>
</reference>
<reference key="4">
    <citation type="journal article" date="2002" name="J. Biol. Chem.">
        <title>Functional diversity of Xenopus lymphoid enhancer factor/T-cell factor transcription factors relies on combinations of activating and repressing elements.</title>
        <authorList>
            <person name="Gradl D."/>
            <person name="Koenig A."/>
            <person name="Wedlich D."/>
        </authorList>
    </citation>
    <scope>FUNCTION</scope>
    <scope>SUBCELLULAR LOCATION</scope>
</reference>